<comment type="function">
    <text evidence="1">Catalyzes the formation of acetyl phosphate from acetate and ATP. Can also catalyze the reverse reaction.</text>
</comment>
<comment type="catalytic activity">
    <reaction evidence="1">
        <text>acetate + ATP = acetyl phosphate + ADP</text>
        <dbReference type="Rhea" id="RHEA:11352"/>
        <dbReference type="ChEBI" id="CHEBI:22191"/>
        <dbReference type="ChEBI" id="CHEBI:30089"/>
        <dbReference type="ChEBI" id="CHEBI:30616"/>
        <dbReference type="ChEBI" id="CHEBI:456216"/>
        <dbReference type="EC" id="2.7.2.1"/>
    </reaction>
</comment>
<comment type="cofactor">
    <cofactor evidence="1">
        <name>Mg(2+)</name>
        <dbReference type="ChEBI" id="CHEBI:18420"/>
    </cofactor>
    <cofactor evidence="1">
        <name>Mn(2+)</name>
        <dbReference type="ChEBI" id="CHEBI:29035"/>
    </cofactor>
    <text evidence="1">Mg(2+). Can also accept Mn(2+).</text>
</comment>
<comment type="pathway">
    <text evidence="1">Metabolic intermediate biosynthesis; acetyl-CoA biosynthesis; acetyl-CoA from acetate: step 1/2.</text>
</comment>
<comment type="subunit">
    <text evidence="1">Homodimer.</text>
</comment>
<comment type="subcellular location">
    <subcellularLocation>
        <location evidence="1">Cytoplasm</location>
    </subcellularLocation>
</comment>
<comment type="similarity">
    <text evidence="1">Belongs to the acetokinase family.</text>
</comment>
<gene>
    <name evidence="1" type="primary">ackA</name>
    <name type="synonym">ack</name>
    <name type="ordered locus">TP_0476</name>
</gene>
<sequence length="448" mass="49195">MIILTLNCGSSSVKYQVYNWTERAVIAVGVVERVTQAGSVITHEVHGRENHVRESPCPTHTEAVQLIISTLTDAHVGVISDMSLIKAVGHRVLHAADRFVKSVVVTPDVLETFRSVQDLGPLHNPANIRGIEAAQAVIPSVPHCAIMDTAWHQTMPEASFMYAVPRQWYEEYAVRRYGFHGTSFLYTAKRASVILKKRAEDTNIIIAHIGNGASMCCVKNGVSFDTSMGITPLEGLIMGTRCGDCDPALAFYIMRKTGMSVSDIDTTLNKQSGLLGITGKYVDRRDVCAAMKNGDALARLAFDMEVHRIRKYFGAYVAALGKQPDALVFTAGVGEMCCDVRAAACAGLEHLGIRLDARKNELARTRNAETEISTDDSPVRILVIPTDEELVMTEDTYALMQGTYDVHTRFTYSFQDPTYVNKARAAGLKRDLEKNPALATIVVPRLDT</sequence>
<evidence type="ECO:0000255" key="1">
    <source>
        <dbReference type="HAMAP-Rule" id="MF_00020"/>
    </source>
</evidence>
<proteinExistence type="inferred from homology"/>
<protein>
    <recommendedName>
        <fullName evidence="1">Acetate kinase</fullName>
        <ecNumber evidence="1">2.7.2.1</ecNumber>
    </recommendedName>
    <alternativeName>
        <fullName evidence="1">Acetokinase</fullName>
    </alternativeName>
</protein>
<name>ACKA_TREPA</name>
<dbReference type="EC" id="2.7.2.1" evidence="1"/>
<dbReference type="EMBL" id="AE000520">
    <property type="protein sequence ID" value="AAC65463.1"/>
    <property type="molecule type" value="Genomic_DNA"/>
</dbReference>
<dbReference type="PIR" id="B71319">
    <property type="entry name" value="B71319"/>
</dbReference>
<dbReference type="RefSeq" id="WP_010881925.1">
    <property type="nucleotide sequence ID" value="NC_021490.2"/>
</dbReference>
<dbReference type="SMR" id="O83489"/>
<dbReference type="STRING" id="243276.TP_0476"/>
<dbReference type="EnsemblBacteria" id="AAC65463">
    <property type="protein sequence ID" value="AAC65463"/>
    <property type="gene ID" value="TP_0476"/>
</dbReference>
<dbReference type="KEGG" id="tpa:TP_0476"/>
<dbReference type="KEGG" id="tpw:TPANIC_0476"/>
<dbReference type="eggNOG" id="COG0282">
    <property type="taxonomic scope" value="Bacteria"/>
</dbReference>
<dbReference type="HOGENOM" id="CLU_020352_0_1_12"/>
<dbReference type="OrthoDB" id="9802453at2"/>
<dbReference type="UniPathway" id="UPA00340">
    <property type="reaction ID" value="UER00458"/>
</dbReference>
<dbReference type="Proteomes" id="UP000000811">
    <property type="component" value="Chromosome"/>
</dbReference>
<dbReference type="GO" id="GO:0005737">
    <property type="term" value="C:cytoplasm"/>
    <property type="evidence" value="ECO:0007669"/>
    <property type="project" value="UniProtKB-SubCell"/>
</dbReference>
<dbReference type="GO" id="GO:0008776">
    <property type="term" value="F:acetate kinase activity"/>
    <property type="evidence" value="ECO:0007669"/>
    <property type="project" value="UniProtKB-UniRule"/>
</dbReference>
<dbReference type="GO" id="GO:0005524">
    <property type="term" value="F:ATP binding"/>
    <property type="evidence" value="ECO:0007669"/>
    <property type="project" value="UniProtKB-KW"/>
</dbReference>
<dbReference type="GO" id="GO:0000287">
    <property type="term" value="F:magnesium ion binding"/>
    <property type="evidence" value="ECO:0007669"/>
    <property type="project" value="UniProtKB-UniRule"/>
</dbReference>
<dbReference type="GO" id="GO:0006083">
    <property type="term" value="P:acetate metabolic process"/>
    <property type="evidence" value="ECO:0007669"/>
    <property type="project" value="TreeGrafter"/>
</dbReference>
<dbReference type="GO" id="GO:0006085">
    <property type="term" value="P:acetyl-CoA biosynthetic process"/>
    <property type="evidence" value="ECO:0007669"/>
    <property type="project" value="UniProtKB-UniRule"/>
</dbReference>
<dbReference type="CDD" id="cd24010">
    <property type="entry name" value="ASKHA_NBD_AcK_PK"/>
    <property type="match status" value="1"/>
</dbReference>
<dbReference type="Gene3D" id="3.30.420.40">
    <property type="match status" value="2"/>
</dbReference>
<dbReference type="HAMAP" id="MF_00020">
    <property type="entry name" value="Acetate_kinase"/>
    <property type="match status" value="1"/>
</dbReference>
<dbReference type="InterPro" id="IPR004372">
    <property type="entry name" value="Ac/propionate_kinase"/>
</dbReference>
<dbReference type="InterPro" id="IPR000890">
    <property type="entry name" value="Aliphatic_acid_kin_short-chain"/>
</dbReference>
<dbReference type="InterPro" id="IPR023865">
    <property type="entry name" value="Aliphatic_acid_kinase_CS"/>
</dbReference>
<dbReference type="InterPro" id="IPR043129">
    <property type="entry name" value="ATPase_NBD"/>
</dbReference>
<dbReference type="NCBIfam" id="TIGR00016">
    <property type="entry name" value="ackA"/>
    <property type="match status" value="1"/>
</dbReference>
<dbReference type="PANTHER" id="PTHR21060">
    <property type="entry name" value="ACETATE KINASE"/>
    <property type="match status" value="1"/>
</dbReference>
<dbReference type="PANTHER" id="PTHR21060:SF15">
    <property type="entry name" value="ACETATE KINASE-RELATED"/>
    <property type="match status" value="1"/>
</dbReference>
<dbReference type="Pfam" id="PF00871">
    <property type="entry name" value="Acetate_kinase"/>
    <property type="match status" value="1"/>
</dbReference>
<dbReference type="PIRSF" id="PIRSF000722">
    <property type="entry name" value="Acetate_prop_kin"/>
    <property type="match status" value="1"/>
</dbReference>
<dbReference type="PRINTS" id="PR00471">
    <property type="entry name" value="ACETATEKNASE"/>
</dbReference>
<dbReference type="SUPFAM" id="SSF53067">
    <property type="entry name" value="Actin-like ATPase domain"/>
    <property type="match status" value="2"/>
</dbReference>
<dbReference type="PROSITE" id="PS01075">
    <property type="entry name" value="ACETATE_KINASE_1"/>
    <property type="match status" value="1"/>
</dbReference>
<dbReference type="PROSITE" id="PS01076">
    <property type="entry name" value="ACETATE_KINASE_2"/>
    <property type="match status" value="1"/>
</dbReference>
<reference key="1">
    <citation type="journal article" date="1998" name="Science">
        <title>Complete genome sequence of Treponema pallidum, the syphilis spirochete.</title>
        <authorList>
            <person name="Fraser C.M."/>
            <person name="Norris S.J."/>
            <person name="Weinstock G.M."/>
            <person name="White O."/>
            <person name="Sutton G.G."/>
            <person name="Dodson R.J."/>
            <person name="Gwinn M.L."/>
            <person name="Hickey E.K."/>
            <person name="Clayton R.A."/>
            <person name="Ketchum K.A."/>
            <person name="Sodergren E."/>
            <person name="Hardham J.M."/>
            <person name="McLeod M.P."/>
            <person name="Salzberg S.L."/>
            <person name="Peterson J.D."/>
            <person name="Khalak H.G."/>
            <person name="Richardson D.L."/>
            <person name="Howell J.K."/>
            <person name="Chidambaram M."/>
            <person name="Utterback T.R."/>
            <person name="McDonald L.A."/>
            <person name="Artiach P."/>
            <person name="Bowman C."/>
            <person name="Cotton M.D."/>
            <person name="Fujii C."/>
            <person name="Garland S.A."/>
            <person name="Hatch B."/>
            <person name="Horst K."/>
            <person name="Roberts K.M."/>
            <person name="Sandusky M."/>
            <person name="Weidman J.F."/>
            <person name="Smith H.O."/>
            <person name="Venter J.C."/>
        </authorList>
    </citation>
    <scope>NUCLEOTIDE SEQUENCE [LARGE SCALE GENOMIC DNA]</scope>
    <source>
        <strain>Nichols</strain>
    </source>
</reference>
<feature type="chain" id="PRO_0000107634" description="Acetate kinase">
    <location>
        <begin position="1"/>
        <end position="448"/>
    </location>
</feature>
<feature type="active site" description="Proton donor/acceptor" evidence="1">
    <location>
        <position position="148"/>
    </location>
</feature>
<feature type="binding site" evidence="1">
    <location>
        <position position="7"/>
    </location>
    <ligand>
        <name>Mg(2+)</name>
        <dbReference type="ChEBI" id="CHEBI:18420"/>
    </ligand>
</feature>
<feature type="binding site" evidence="1">
    <location>
        <position position="14"/>
    </location>
    <ligand>
        <name>ATP</name>
        <dbReference type="ChEBI" id="CHEBI:30616"/>
    </ligand>
</feature>
<feature type="binding site" evidence="1">
    <location>
        <position position="91"/>
    </location>
    <ligand>
        <name>substrate</name>
    </ligand>
</feature>
<feature type="binding site" evidence="1">
    <location>
        <begin position="208"/>
        <end position="212"/>
    </location>
    <ligand>
        <name>ATP</name>
        <dbReference type="ChEBI" id="CHEBI:30616"/>
    </ligand>
</feature>
<feature type="binding site" evidence="1">
    <location>
        <begin position="283"/>
        <end position="285"/>
    </location>
    <ligand>
        <name>ATP</name>
        <dbReference type="ChEBI" id="CHEBI:30616"/>
    </ligand>
</feature>
<feature type="binding site" evidence="1">
    <location>
        <position position="388"/>
    </location>
    <ligand>
        <name>Mg(2+)</name>
        <dbReference type="ChEBI" id="CHEBI:18420"/>
    </ligand>
</feature>
<feature type="site" description="Transition state stabilizer" evidence="1">
    <location>
        <position position="180"/>
    </location>
</feature>
<feature type="site" description="Transition state stabilizer" evidence="1">
    <location>
        <position position="241"/>
    </location>
</feature>
<organism>
    <name type="scientific">Treponema pallidum (strain Nichols)</name>
    <dbReference type="NCBI Taxonomy" id="243276"/>
    <lineage>
        <taxon>Bacteria</taxon>
        <taxon>Pseudomonadati</taxon>
        <taxon>Spirochaetota</taxon>
        <taxon>Spirochaetia</taxon>
        <taxon>Spirochaetales</taxon>
        <taxon>Treponemataceae</taxon>
        <taxon>Treponema</taxon>
    </lineage>
</organism>
<keyword id="KW-0067">ATP-binding</keyword>
<keyword id="KW-0963">Cytoplasm</keyword>
<keyword id="KW-0418">Kinase</keyword>
<keyword id="KW-0460">Magnesium</keyword>
<keyword id="KW-0479">Metal-binding</keyword>
<keyword id="KW-0547">Nucleotide-binding</keyword>
<keyword id="KW-1185">Reference proteome</keyword>
<keyword id="KW-0808">Transferase</keyword>
<accession>O83489</accession>